<accession>P17894</accession>
<accession>P19671</accession>
<accession>P71027</accession>
<sequence>MLAELSIKNFAIIEELTVSFERGLTVLTGETGAGKSIIIDAISLLVGGRGSSEFVRYGEAKAELEGLFLLESGHPVLGVCAEQGIDVSDEMIVMRRDISTSGKSVCRVNGKLVTIASLREIGRLLLDIHGQHDNQLLMEDENHLQLLDKFAGAEVESALKTYQEGYQRYVKLLKKLKQLSESEQEMAHRLDLIQFQLEEIESAKLELNEDEQLQEERQQISNFEKIYESLQNAYNALRSEQGGLDWVGMASAQLEDISDINEPLKKMSESVSNSYYLLEDATFQMRNMLDELEFDPERLNYIETRLNEIKQLKRKYGATVEDILEYASKIEEEIDQIENRDSHLQSLKKELDSVGKDVAVEAANVSQIRKTWAKKLADEIHRELKSLYMEKSTFDTEFKVRTASRNEEAPLVNGQPVQLTEQGIDLVKFLISTNTGEPLKSLSKVASGGELSRVMLAIKSIFSSQQDVTSIIFDEVDTGVSGRVAQAIAEKIHKVSIGSQVLCITHLPQVAAMADTHLYIAKELKDGRTTTRVKPLSKQEKVAEIGRMIAGVEVTDLTKRHAKELLKQADQVKTTG</sequence>
<dbReference type="EMBL" id="M30297">
    <property type="protein sequence ID" value="AAA22691.1"/>
    <property type="molecule type" value="Genomic_DNA"/>
</dbReference>
<dbReference type="EMBL" id="D84432">
    <property type="protein sequence ID" value="BAA12579.1"/>
    <property type="molecule type" value="Genomic_DNA"/>
</dbReference>
<dbReference type="EMBL" id="AL009126">
    <property type="protein sequence ID" value="CAB14355.2"/>
    <property type="molecule type" value="Genomic_DNA"/>
</dbReference>
<dbReference type="EMBL" id="M27869">
    <property type="protein sequence ID" value="AAA22209.1"/>
    <property type="molecule type" value="Genomic_DNA"/>
</dbReference>
<dbReference type="EMBL" id="U68235">
    <property type="protein sequence ID" value="AAC44870.1"/>
    <property type="molecule type" value="Genomic_DNA"/>
</dbReference>
<dbReference type="PIR" id="B35128">
    <property type="entry name" value="B35128"/>
</dbReference>
<dbReference type="RefSeq" id="NP_390304.2">
    <property type="nucleotide sequence ID" value="NC_000964.3"/>
</dbReference>
<dbReference type="RefSeq" id="WP_003230267.1">
    <property type="nucleotide sequence ID" value="NZ_OZ025638.1"/>
</dbReference>
<dbReference type="SMR" id="P17894"/>
<dbReference type="FunCoup" id="P17894">
    <property type="interactions" value="379"/>
</dbReference>
<dbReference type="STRING" id="224308.BSU24240"/>
<dbReference type="jPOST" id="P17894"/>
<dbReference type="PaxDb" id="224308-BSU24240"/>
<dbReference type="EnsemblBacteria" id="CAB14355">
    <property type="protein sequence ID" value="CAB14355"/>
    <property type="gene ID" value="BSU_24240"/>
</dbReference>
<dbReference type="GeneID" id="938656"/>
<dbReference type="KEGG" id="bsu:BSU24240"/>
<dbReference type="PATRIC" id="fig|224308.179.peg.2642"/>
<dbReference type="eggNOG" id="COG0497">
    <property type="taxonomic scope" value="Bacteria"/>
</dbReference>
<dbReference type="InParanoid" id="P17894"/>
<dbReference type="OrthoDB" id="9806954at2"/>
<dbReference type="PhylomeDB" id="P17894"/>
<dbReference type="BioCyc" id="BSUB:BSU24240-MONOMER"/>
<dbReference type="Proteomes" id="UP000001570">
    <property type="component" value="Chromosome"/>
</dbReference>
<dbReference type="GO" id="GO:0043590">
    <property type="term" value="C:bacterial nucleoid"/>
    <property type="evidence" value="ECO:0000314"/>
    <property type="project" value="UniProtKB"/>
</dbReference>
<dbReference type="GO" id="GO:0005737">
    <property type="term" value="C:cytoplasm"/>
    <property type="evidence" value="ECO:0007669"/>
    <property type="project" value="UniProtKB-KW"/>
</dbReference>
<dbReference type="GO" id="GO:0005524">
    <property type="term" value="F:ATP binding"/>
    <property type="evidence" value="ECO:0007669"/>
    <property type="project" value="UniProtKB-KW"/>
</dbReference>
<dbReference type="GO" id="GO:0016887">
    <property type="term" value="F:ATP hydrolysis activity"/>
    <property type="evidence" value="ECO:0007669"/>
    <property type="project" value="InterPro"/>
</dbReference>
<dbReference type="GO" id="GO:0006310">
    <property type="term" value="P:DNA recombination"/>
    <property type="evidence" value="ECO:0007669"/>
    <property type="project" value="InterPro"/>
</dbReference>
<dbReference type="GO" id="GO:0006302">
    <property type="term" value="P:double-strand break repair"/>
    <property type="evidence" value="ECO:0000315"/>
    <property type="project" value="UniProtKB"/>
</dbReference>
<dbReference type="GO" id="GO:0009432">
    <property type="term" value="P:SOS response"/>
    <property type="evidence" value="ECO:0000318"/>
    <property type="project" value="GO_Central"/>
</dbReference>
<dbReference type="CDD" id="cd03241">
    <property type="entry name" value="ABC_RecN"/>
    <property type="match status" value="2"/>
</dbReference>
<dbReference type="FunFam" id="3.40.50.300:FF:000319">
    <property type="entry name" value="DNA repair protein RecN"/>
    <property type="match status" value="1"/>
</dbReference>
<dbReference type="FunFam" id="3.40.50.300:FF:000356">
    <property type="entry name" value="DNA repair protein RecN"/>
    <property type="match status" value="1"/>
</dbReference>
<dbReference type="Gene3D" id="3.40.50.300">
    <property type="entry name" value="P-loop containing nucleotide triphosphate hydrolases"/>
    <property type="match status" value="2"/>
</dbReference>
<dbReference type="InterPro" id="IPR004604">
    <property type="entry name" value="DNA_recomb/repair_RecN"/>
</dbReference>
<dbReference type="InterPro" id="IPR027417">
    <property type="entry name" value="P-loop_NTPase"/>
</dbReference>
<dbReference type="InterPro" id="IPR038729">
    <property type="entry name" value="Rad50/SbcC_AAA"/>
</dbReference>
<dbReference type="NCBIfam" id="TIGR00634">
    <property type="entry name" value="recN"/>
    <property type="match status" value="1"/>
</dbReference>
<dbReference type="PANTHER" id="PTHR11059">
    <property type="entry name" value="DNA REPAIR PROTEIN RECN"/>
    <property type="match status" value="1"/>
</dbReference>
<dbReference type="PANTHER" id="PTHR11059:SF0">
    <property type="entry name" value="DNA REPAIR PROTEIN RECN"/>
    <property type="match status" value="1"/>
</dbReference>
<dbReference type="Pfam" id="PF13476">
    <property type="entry name" value="AAA_23"/>
    <property type="match status" value="1"/>
</dbReference>
<dbReference type="PIRSF" id="PIRSF003128">
    <property type="entry name" value="RecN"/>
    <property type="match status" value="1"/>
</dbReference>
<dbReference type="SUPFAM" id="SSF52540">
    <property type="entry name" value="P-loop containing nucleoside triphosphate hydrolases"/>
    <property type="match status" value="2"/>
</dbReference>
<reference key="1">
    <citation type="journal article" date="1990" name="J. Bacteriol.">
        <title>Characterization of the spoIVB and recN loci of Bacillus subtilis.</title>
        <authorList>
            <person name="van Hoy B.E."/>
            <person name="Hoch J.A."/>
        </authorList>
    </citation>
    <scope>NUCLEOTIDE SEQUENCE [GENOMIC DNA]</scope>
    <source>
        <strain>168 / PY79</strain>
    </source>
</reference>
<reference key="2">
    <citation type="journal article" date="1996" name="Microbiology">
        <title>Systematic sequencing of the 283 kb 210 degrees-232 degrees region of the Bacillus subtilis genome containing the skin element and many sporulation genes.</title>
        <authorList>
            <person name="Mizuno M."/>
            <person name="Masuda S."/>
            <person name="Takemaru K."/>
            <person name="Hosono S."/>
            <person name="Sato T."/>
            <person name="Takeuchi M."/>
            <person name="Kobayashi Y."/>
        </authorList>
    </citation>
    <scope>NUCLEOTIDE SEQUENCE [GENOMIC DNA]</scope>
    <source>
        <strain>168 / JH642</strain>
    </source>
</reference>
<reference key="3">
    <citation type="journal article" date="1997" name="Nature">
        <title>The complete genome sequence of the Gram-positive bacterium Bacillus subtilis.</title>
        <authorList>
            <person name="Kunst F."/>
            <person name="Ogasawara N."/>
            <person name="Moszer I."/>
            <person name="Albertini A.M."/>
            <person name="Alloni G."/>
            <person name="Azevedo V."/>
            <person name="Bertero M.G."/>
            <person name="Bessieres P."/>
            <person name="Bolotin A."/>
            <person name="Borchert S."/>
            <person name="Borriss R."/>
            <person name="Boursier L."/>
            <person name="Brans A."/>
            <person name="Braun M."/>
            <person name="Brignell S.C."/>
            <person name="Bron S."/>
            <person name="Brouillet S."/>
            <person name="Bruschi C.V."/>
            <person name="Caldwell B."/>
            <person name="Capuano V."/>
            <person name="Carter N.M."/>
            <person name="Choi S.-K."/>
            <person name="Codani J.-J."/>
            <person name="Connerton I.F."/>
            <person name="Cummings N.J."/>
            <person name="Daniel R.A."/>
            <person name="Denizot F."/>
            <person name="Devine K.M."/>
            <person name="Duesterhoeft A."/>
            <person name="Ehrlich S.D."/>
            <person name="Emmerson P.T."/>
            <person name="Entian K.-D."/>
            <person name="Errington J."/>
            <person name="Fabret C."/>
            <person name="Ferrari E."/>
            <person name="Foulger D."/>
            <person name="Fritz C."/>
            <person name="Fujita M."/>
            <person name="Fujita Y."/>
            <person name="Fuma S."/>
            <person name="Galizzi A."/>
            <person name="Galleron N."/>
            <person name="Ghim S.-Y."/>
            <person name="Glaser P."/>
            <person name="Goffeau A."/>
            <person name="Golightly E.J."/>
            <person name="Grandi G."/>
            <person name="Guiseppi G."/>
            <person name="Guy B.J."/>
            <person name="Haga K."/>
            <person name="Haiech J."/>
            <person name="Harwood C.R."/>
            <person name="Henaut A."/>
            <person name="Hilbert H."/>
            <person name="Holsappel S."/>
            <person name="Hosono S."/>
            <person name="Hullo M.-F."/>
            <person name="Itaya M."/>
            <person name="Jones L.-M."/>
            <person name="Joris B."/>
            <person name="Karamata D."/>
            <person name="Kasahara Y."/>
            <person name="Klaerr-Blanchard M."/>
            <person name="Klein C."/>
            <person name="Kobayashi Y."/>
            <person name="Koetter P."/>
            <person name="Koningstein G."/>
            <person name="Krogh S."/>
            <person name="Kumano M."/>
            <person name="Kurita K."/>
            <person name="Lapidus A."/>
            <person name="Lardinois S."/>
            <person name="Lauber J."/>
            <person name="Lazarevic V."/>
            <person name="Lee S.-M."/>
            <person name="Levine A."/>
            <person name="Liu H."/>
            <person name="Masuda S."/>
            <person name="Mauel C."/>
            <person name="Medigue C."/>
            <person name="Medina N."/>
            <person name="Mellado R.P."/>
            <person name="Mizuno M."/>
            <person name="Moestl D."/>
            <person name="Nakai S."/>
            <person name="Noback M."/>
            <person name="Noone D."/>
            <person name="O'Reilly M."/>
            <person name="Ogawa K."/>
            <person name="Ogiwara A."/>
            <person name="Oudega B."/>
            <person name="Park S.-H."/>
            <person name="Parro V."/>
            <person name="Pohl T.M."/>
            <person name="Portetelle D."/>
            <person name="Porwollik S."/>
            <person name="Prescott A.M."/>
            <person name="Presecan E."/>
            <person name="Pujic P."/>
            <person name="Purnelle B."/>
            <person name="Rapoport G."/>
            <person name="Rey M."/>
            <person name="Reynolds S."/>
            <person name="Rieger M."/>
            <person name="Rivolta C."/>
            <person name="Rocha E."/>
            <person name="Roche B."/>
            <person name="Rose M."/>
            <person name="Sadaie Y."/>
            <person name="Sato T."/>
            <person name="Scanlan E."/>
            <person name="Schleich S."/>
            <person name="Schroeter R."/>
            <person name="Scoffone F."/>
            <person name="Sekiguchi J."/>
            <person name="Sekowska A."/>
            <person name="Seror S.J."/>
            <person name="Serror P."/>
            <person name="Shin B.-S."/>
            <person name="Soldo B."/>
            <person name="Sorokin A."/>
            <person name="Tacconi E."/>
            <person name="Takagi T."/>
            <person name="Takahashi H."/>
            <person name="Takemaru K."/>
            <person name="Takeuchi M."/>
            <person name="Tamakoshi A."/>
            <person name="Tanaka T."/>
            <person name="Terpstra P."/>
            <person name="Tognoni A."/>
            <person name="Tosato V."/>
            <person name="Uchiyama S."/>
            <person name="Vandenbol M."/>
            <person name="Vannier F."/>
            <person name="Vassarotti A."/>
            <person name="Viari A."/>
            <person name="Wambutt R."/>
            <person name="Wedler E."/>
            <person name="Wedler H."/>
            <person name="Weitzenegger T."/>
            <person name="Winters P."/>
            <person name="Wipat A."/>
            <person name="Yamamoto H."/>
            <person name="Yamane K."/>
            <person name="Yasumoto K."/>
            <person name="Yata K."/>
            <person name="Yoshida K."/>
            <person name="Yoshikawa H.-F."/>
            <person name="Zumstein E."/>
            <person name="Yoshikawa H."/>
            <person name="Danchin A."/>
        </authorList>
    </citation>
    <scope>NUCLEOTIDE SEQUENCE [LARGE SCALE GENOMIC DNA]</scope>
    <source>
        <strain>168</strain>
    </source>
</reference>
<reference key="4">
    <citation type="journal article" date="2009" name="Microbiology">
        <title>From a consortium sequence to a unified sequence: the Bacillus subtilis 168 reference genome a decade later.</title>
        <authorList>
            <person name="Barbe V."/>
            <person name="Cruveiller S."/>
            <person name="Kunst F."/>
            <person name="Lenoble P."/>
            <person name="Meurice G."/>
            <person name="Sekowska A."/>
            <person name="Vallenet D."/>
            <person name="Wang T."/>
            <person name="Moszer I."/>
            <person name="Medigue C."/>
            <person name="Danchin A."/>
        </authorList>
    </citation>
    <scope>SEQUENCE REVISION TO 189 AND 546-548</scope>
</reference>
<reference key="5">
    <citation type="journal article" date="1989" name="Gene">
        <title>Nucleotide sequence of a Bacillus subtilis arginine regulatory gene and homology of its product to the Escherichia coli arginine repressor.</title>
        <authorList>
            <person name="North A.K."/>
            <person name="Smith M.C.M."/>
            <person name="Baumberg S."/>
        </authorList>
    </citation>
    <scope>NUCLEOTIDE SEQUENCE [GENOMIC DNA] OF 1-111</scope>
    <source>
        <strain>168 / EMG50</strain>
    </source>
</reference>
<reference key="6">
    <citation type="journal article" date="1997" name="Mol. Microbiol.">
        <title>SpoIVB has two distinct functions during spore formation in Bacillus subtilis.</title>
        <authorList>
            <person name="Oke V."/>
            <person name="Shchepetov M."/>
            <person name="Cutting S."/>
        </authorList>
    </citation>
    <scope>NUCLEOTIDE SEQUENCE [GENOMIC DNA] OF 346-576</scope>
    <source>
        <strain>168 / JH642</strain>
    </source>
</reference>
<reference key="7">
    <citation type="journal article" date="2004" name="Mol. Microbiol.">
        <title>Visualization of DNA double-strand break repair in live bacteria reveals dynamic recruitment of Bacillus subtilis RecF, RecO and RecN proteins to distinct sites on the nucleoids.</title>
        <authorList>
            <person name="Kidane D."/>
            <person name="Sanchez H."/>
            <person name="Alonso J.C."/>
            <person name="Graumann P.L."/>
        </authorList>
    </citation>
    <scope>SUBCELLULAR LOCATION</scope>
    <scope>TEMPORAL ORDER OF DNA DOUBLE-STRAND BREAK RECRUITMENT</scope>
    <source>
        <strain>168 / YB886 / BG214</strain>
    </source>
</reference>
<reference key="8">
    <citation type="journal article" date="2005" name="J. Cell Biol.">
        <title>Dynamic formation of RecA filaments at DNA double strand break repair centers in live cells.</title>
        <authorList>
            <person name="Kidane D."/>
            <person name="Graumann P.L."/>
        </authorList>
    </citation>
    <scope>RECRUITMENT OF RECA</scope>
    <source>
        <strain>168 / YB886 / BG214</strain>
    </source>
</reference>
<reference key="9">
    <citation type="journal article" date="2006" name="J. Bacteriol.">
        <title>Recruitment of Bacillus subtilis RecN to DNA double-strand breaks in the absence of DNA end processing.</title>
        <authorList>
            <person name="Sanchez H."/>
            <person name="Kidane D."/>
            <person name="Castillo Cozar M."/>
            <person name="Graumann P.L."/>
            <person name="Alonso J.C."/>
        </authorList>
    </citation>
    <scope>SUBCELLULAR LOCATION</scope>
    <source>
        <strain>168 / YB886 / BG214</strain>
    </source>
</reference>
<keyword id="KW-0067">ATP-binding</keyword>
<keyword id="KW-0963">Cytoplasm</keyword>
<keyword id="KW-0227">DNA damage</keyword>
<keyword id="KW-0234">DNA repair</keyword>
<keyword id="KW-0547">Nucleotide-binding</keyword>
<keyword id="KW-1185">Reference proteome</keyword>
<proteinExistence type="inferred from homology"/>
<evidence type="ECO:0000255" key="1"/>
<evidence type="ECO:0000269" key="2">
    <source>
    </source>
</evidence>
<evidence type="ECO:0000269" key="3">
    <source>
    </source>
</evidence>
<evidence type="ECO:0000305" key="4"/>
<protein>
    <recommendedName>
        <fullName>DNA repair protein RecN</fullName>
    </recommendedName>
    <alternativeName>
        <fullName>Recombination protein N</fullName>
    </alternativeName>
</protein>
<organism>
    <name type="scientific">Bacillus subtilis (strain 168)</name>
    <dbReference type="NCBI Taxonomy" id="224308"/>
    <lineage>
        <taxon>Bacteria</taxon>
        <taxon>Bacillati</taxon>
        <taxon>Bacillota</taxon>
        <taxon>Bacilli</taxon>
        <taxon>Bacillales</taxon>
        <taxon>Bacillaceae</taxon>
        <taxon>Bacillus</taxon>
    </lineage>
</organism>
<feature type="chain" id="PRO_0000188014" description="DNA repair protein RecN">
    <location>
        <begin position="1"/>
        <end position="576"/>
    </location>
</feature>
<feature type="binding site" evidence="1">
    <location>
        <begin position="29"/>
        <end position="36"/>
    </location>
    <ligand>
        <name>ATP</name>
        <dbReference type="ChEBI" id="CHEBI:30616"/>
    </ligand>
</feature>
<feature type="sequence conflict" description="In Ref. 5; AAA22209." evidence="4" ref="5">
    <original>H</original>
    <variation>L</variation>
    <location>
        <position position="74"/>
    </location>
</feature>
<feature type="sequence conflict" description="In Ref. 5; AAA22209." evidence="4" ref="5">
    <original>SVCRVNGK</original>
    <variation>AFAVSMAS</variation>
    <location>
        <begin position="104"/>
        <end position="111"/>
    </location>
</feature>
<feature type="sequence conflict" description="In Ref. 1; AAA22691 and 2; BAA12579." evidence="4" ref="1 2">
    <original>R</original>
    <variation>L</variation>
    <location>
        <position position="189"/>
    </location>
</feature>
<feature type="sequence conflict" description="In Ref. 1; AAA22691, 2; BAA12579 and 6; AAC44870." evidence="4" ref="1 2 6">
    <original>GRM</original>
    <variation>ERS</variation>
    <location>
        <begin position="546"/>
        <end position="548"/>
    </location>
</feature>
<comment type="function">
    <text>Involved in recombinational repair of damaged DNA. Seems to be the first protein recruited to repair centers, foci that are the site of double-strand DNA break(s), followed by RecO and then RecF.</text>
</comment>
<comment type="subunit">
    <text>Forms multimers, possibly octamers; these become larger following DNA damage. Recruited to foci following DNA damage; probably interacts with RecF and RecO.</text>
</comment>
<comment type="subcellular location">
    <subcellularLocation>
        <location evidence="2 3">Cytoplasm</location>
        <location evidence="2 3">Nucleoid</location>
    </subcellularLocation>
    <text>Cytoplasmically located in untreated cells. Recruited to foci following treatment with DNA damaging agents; these foci are presumably the breaks themselves. They are almost always located within nucleoids.</text>
</comment>
<comment type="similarity">
    <text evidence="4">Belongs to the RecN family.</text>
</comment>
<name>RECN_BACSU</name>
<gene>
    <name type="primary">recN</name>
    <name type="ordered locus">BSU24240</name>
</gene>